<organism evidence="12">
    <name type="scientific">Arabidopsis thaliana</name>
    <name type="common">Mouse-ear cress</name>
    <dbReference type="NCBI Taxonomy" id="3702"/>
    <lineage>
        <taxon>Eukaryota</taxon>
        <taxon>Viridiplantae</taxon>
        <taxon>Streptophyta</taxon>
        <taxon>Embryophyta</taxon>
        <taxon>Tracheophyta</taxon>
        <taxon>Spermatophyta</taxon>
        <taxon>Magnoliopsida</taxon>
        <taxon>eudicotyledons</taxon>
        <taxon>Gunneridae</taxon>
        <taxon>Pentapetalae</taxon>
        <taxon>rosids</taxon>
        <taxon>malvids</taxon>
        <taxon>Brassicales</taxon>
        <taxon>Brassicaceae</taxon>
        <taxon>Camelineae</taxon>
        <taxon>Arabidopsis</taxon>
    </lineage>
</organism>
<comment type="alternative products">
    <event type="alternative splicing"/>
    <isoform>
        <id>P93017-1</id>
        <name>1</name>
        <sequence type="displayed"/>
    </isoform>
    <isoform>
        <id>P93017-2</id>
        <name>2</name>
        <sequence type="described" ref="VSP_058256"/>
    </isoform>
</comment>
<comment type="tissue specificity">
    <text evidence="5">Expressed mainly in the low bolt.</text>
</comment>
<comment type="induction">
    <text evidence="2 4 5">Circadian-regulation (PubMed:24442277). Down-regulated in axillary buds within 24 hours after decapitation and then up-regulated (PubMed:15908603). Down-regulated by the transcription factor ERF114 (PubMed:23616605). Down-regulated by heat (PubMed:24442277). Up-regulated by salt, cold and dark growth conditions (PubMed:24442277).</text>
</comment>
<comment type="disruption phenotype">
    <text evidence="3">No visible phenotype. Drm1 and drmh1 double mutants have no visible phenotype.</text>
</comment>
<comment type="miscellaneous">
    <text evidence="8">Predicted to be an intrinsically disordered protein.</text>
</comment>
<comment type="similarity">
    <text evidence="9">Belongs to the DRM1/ARP family.</text>
</comment>
<proteinExistence type="evidence at protein level"/>
<evidence type="ECO:0000256" key="1">
    <source>
        <dbReference type="SAM" id="MobiDB-lite"/>
    </source>
</evidence>
<evidence type="ECO:0000269" key="2">
    <source>
    </source>
</evidence>
<evidence type="ECO:0000269" key="3">
    <source>
    </source>
</evidence>
<evidence type="ECO:0000269" key="4">
    <source>
    </source>
</evidence>
<evidence type="ECO:0000269" key="5">
    <source>
    </source>
</evidence>
<evidence type="ECO:0000303" key="6">
    <source>
    </source>
</evidence>
<evidence type="ECO:0000303" key="7">
    <source>
    </source>
</evidence>
<evidence type="ECO:0000303" key="8">
    <source>
    </source>
</evidence>
<evidence type="ECO:0000305" key="9"/>
<evidence type="ECO:0000312" key="10">
    <source>
        <dbReference type="Araport" id="AT2G33830"/>
    </source>
</evidence>
<evidence type="ECO:0000312" key="11">
    <source>
        <dbReference type="EMBL" id="AAK32858.1"/>
    </source>
</evidence>
<evidence type="ECO:0000312" key="12">
    <source>
        <dbReference type="EMBL" id="BAB17679.1"/>
    </source>
</evidence>
<evidence type="ECO:0007744" key="13">
    <source>
    </source>
</evidence>
<dbReference type="EMBL" id="U78721">
    <property type="protein sequence ID" value="AAC69134.2"/>
    <property type="molecule type" value="Genomic_DNA"/>
</dbReference>
<dbReference type="EMBL" id="CP002685">
    <property type="protein sequence ID" value="AEC08891.1"/>
    <property type="molecule type" value="Genomic_DNA"/>
</dbReference>
<dbReference type="EMBL" id="CP002685">
    <property type="protein sequence ID" value="AEC08892.1"/>
    <property type="molecule type" value="Genomic_DNA"/>
</dbReference>
<dbReference type="EMBL" id="AB050786">
    <property type="protein sequence ID" value="BAB17679.1"/>
    <property type="molecule type" value="mRNA"/>
</dbReference>
<dbReference type="EMBL" id="AF361846">
    <property type="protein sequence ID" value="AAK32858.1"/>
    <property type="molecule type" value="mRNA"/>
</dbReference>
<dbReference type="EMBL" id="AY066049">
    <property type="protein sequence ID" value="AAL47416.1"/>
    <property type="molecule type" value="mRNA"/>
</dbReference>
<dbReference type="EMBL" id="AY085689">
    <property type="protein sequence ID" value="AAM62908.1"/>
    <property type="molecule type" value="mRNA"/>
</dbReference>
<dbReference type="PIR" id="B84750">
    <property type="entry name" value="B84750"/>
</dbReference>
<dbReference type="RefSeq" id="NP_001318345.1">
    <molecule id="P93017-2"/>
    <property type="nucleotide sequence ID" value="NM_001336474.1"/>
</dbReference>
<dbReference type="RefSeq" id="NP_850220.1">
    <molecule id="P93017-1"/>
    <property type="nucleotide sequence ID" value="NM_179889.3"/>
</dbReference>
<dbReference type="FunCoup" id="P93017">
    <property type="interactions" value="31"/>
</dbReference>
<dbReference type="IntAct" id="P93017">
    <property type="interactions" value="1"/>
</dbReference>
<dbReference type="STRING" id="3702.P93017"/>
<dbReference type="GlyGen" id="P93017">
    <property type="glycosylation" value="1 site, 1 O-linked glycan (1 site)"/>
</dbReference>
<dbReference type="iPTMnet" id="P93017"/>
<dbReference type="PaxDb" id="3702-AT2G33830.2"/>
<dbReference type="ProteomicsDB" id="224355">
    <molecule id="P93017-1"/>
</dbReference>
<dbReference type="EnsemblPlants" id="AT2G33830.1">
    <molecule id="P93017-2"/>
    <property type="protein sequence ID" value="AT2G33830.1"/>
    <property type="gene ID" value="AT2G33830"/>
</dbReference>
<dbReference type="EnsemblPlants" id="AT2G33830.2">
    <molecule id="P93017-1"/>
    <property type="protein sequence ID" value="AT2G33830.2"/>
    <property type="gene ID" value="AT2G33830"/>
</dbReference>
<dbReference type="GeneID" id="817950"/>
<dbReference type="Gramene" id="AT2G33830.1">
    <molecule id="P93017-2"/>
    <property type="protein sequence ID" value="AT2G33830.1"/>
    <property type="gene ID" value="AT2G33830"/>
</dbReference>
<dbReference type="Gramene" id="AT2G33830.2">
    <molecule id="P93017-1"/>
    <property type="protein sequence ID" value="AT2G33830.2"/>
    <property type="gene ID" value="AT2G33830"/>
</dbReference>
<dbReference type="KEGG" id="ath:AT2G33830"/>
<dbReference type="Araport" id="AT2G33830"/>
<dbReference type="TAIR" id="AT2G33830">
    <property type="gene designation" value="DRM2"/>
</dbReference>
<dbReference type="eggNOG" id="ENOG502S158">
    <property type="taxonomic scope" value="Eukaryota"/>
</dbReference>
<dbReference type="InParanoid" id="P93017"/>
<dbReference type="OMA" id="NTATKGM"/>
<dbReference type="OrthoDB" id="1902663at2759"/>
<dbReference type="PhylomeDB" id="P93017"/>
<dbReference type="PRO" id="PR:P93017"/>
<dbReference type="Proteomes" id="UP000006548">
    <property type="component" value="Chromosome 2"/>
</dbReference>
<dbReference type="ExpressionAtlas" id="P93017">
    <property type="expression patterns" value="baseline and differential"/>
</dbReference>
<dbReference type="GO" id="GO:0005829">
    <property type="term" value="C:cytosol"/>
    <property type="evidence" value="ECO:0007005"/>
    <property type="project" value="TAIR"/>
</dbReference>
<dbReference type="GO" id="GO:0005783">
    <property type="term" value="C:endoplasmic reticulum"/>
    <property type="evidence" value="ECO:0007005"/>
    <property type="project" value="TAIR"/>
</dbReference>
<dbReference type="GO" id="GO:0009617">
    <property type="term" value="P:response to bacterium"/>
    <property type="evidence" value="ECO:0000314"/>
    <property type="project" value="TAIR"/>
</dbReference>
<dbReference type="InterPro" id="IPR008406">
    <property type="entry name" value="DRM/ARP"/>
</dbReference>
<dbReference type="PANTHER" id="PTHR33565">
    <property type="entry name" value="DORMANCY-ASSOCIATED PROTEIN 1"/>
    <property type="match status" value="1"/>
</dbReference>
<dbReference type="PANTHER" id="PTHR33565:SF11">
    <property type="entry name" value="DORMANCY-ASSOCIATED PROTEIN HOMOLOG 1"/>
    <property type="match status" value="1"/>
</dbReference>
<dbReference type="Pfam" id="PF05564">
    <property type="entry name" value="Auxin_repressed"/>
    <property type="match status" value="1"/>
</dbReference>
<protein>
    <recommendedName>
        <fullName evidence="6">Dormancy-associated protein homolog 1</fullName>
    </recommendedName>
    <alternativeName>
        <fullName evidence="7">Auxin-repressed protein 1</fullName>
        <shortName evidence="7">AtARP1</shortName>
    </alternativeName>
    <alternativeName>
        <fullName evidence="6">DRM1 homolog 1</fullName>
    </alternativeName>
    <alternativeName>
        <fullName evidence="8">Dormancy-associated protein 2</fullName>
        <shortName evidence="8">AtDRM2</shortName>
    </alternativeName>
</protein>
<name>DRMH1_ARATH</name>
<keyword id="KW-0025">Alternative splicing</keyword>
<keyword id="KW-0217">Developmental protein</keyword>
<keyword id="KW-0597">Phosphoprotein</keyword>
<keyword id="KW-1185">Reference proteome</keyword>
<accession>P93017</accession>
<accession>Q8RYC4</accession>
<gene>
    <name evidence="9" type="primary">DRMH1</name>
    <name evidence="7" type="synonym">ARP1</name>
    <name evidence="8" type="synonym">DRM2</name>
    <name evidence="10" type="ordered locus">At2g33830</name>
    <name evidence="11" type="ORF">T1B8.13</name>
</gene>
<reference key="1">
    <citation type="journal article" date="1999" name="Nature">
        <title>Sequence and analysis of chromosome 2 of the plant Arabidopsis thaliana.</title>
        <authorList>
            <person name="Lin X."/>
            <person name="Kaul S."/>
            <person name="Rounsley S.D."/>
            <person name="Shea T.P."/>
            <person name="Benito M.-I."/>
            <person name="Town C.D."/>
            <person name="Fujii C.Y."/>
            <person name="Mason T.M."/>
            <person name="Bowman C.L."/>
            <person name="Barnstead M.E."/>
            <person name="Feldblyum T.V."/>
            <person name="Buell C.R."/>
            <person name="Ketchum K.A."/>
            <person name="Lee J.J."/>
            <person name="Ronning C.M."/>
            <person name="Koo H.L."/>
            <person name="Moffat K.S."/>
            <person name="Cronin L.A."/>
            <person name="Shen M."/>
            <person name="Pai G."/>
            <person name="Van Aken S."/>
            <person name="Umayam L."/>
            <person name="Tallon L.J."/>
            <person name="Gill J.E."/>
            <person name="Adams M.D."/>
            <person name="Carrera A.J."/>
            <person name="Creasy T.H."/>
            <person name="Goodman H.M."/>
            <person name="Somerville C.R."/>
            <person name="Copenhaver G.P."/>
            <person name="Preuss D."/>
            <person name="Nierman W.C."/>
            <person name="White O."/>
            <person name="Eisen J.A."/>
            <person name="Salzberg S.L."/>
            <person name="Fraser C.M."/>
            <person name="Venter J.C."/>
        </authorList>
    </citation>
    <scope>NUCLEOTIDE SEQUENCE [LARGE SCALE GENOMIC DNA]</scope>
    <source>
        <strain>cv. Columbia</strain>
    </source>
</reference>
<reference key="2">
    <citation type="journal article" date="2017" name="Plant J.">
        <title>Araport11: a complete reannotation of the Arabidopsis thaliana reference genome.</title>
        <authorList>
            <person name="Cheng C.Y."/>
            <person name="Krishnakumar V."/>
            <person name="Chan A.P."/>
            <person name="Thibaud-Nissen F."/>
            <person name="Schobel S."/>
            <person name="Town C.D."/>
        </authorList>
    </citation>
    <scope>GENOME REANNOTATION</scope>
    <source>
        <strain>cv. Columbia</strain>
    </source>
</reference>
<reference key="3">
    <citation type="journal article" date="2002" name="Science">
        <title>Functional annotation of a full-length Arabidopsis cDNA collection.</title>
        <authorList>
            <person name="Seki M."/>
            <person name="Narusaka M."/>
            <person name="Kamiya A."/>
            <person name="Ishida J."/>
            <person name="Satou M."/>
            <person name="Sakurai T."/>
            <person name="Nakajima M."/>
            <person name="Enju A."/>
            <person name="Akiyama K."/>
            <person name="Oono Y."/>
            <person name="Muramatsu M."/>
            <person name="Hayashizaki Y."/>
            <person name="Kawai J."/>
            <person name="Carninci P."/>
            <person name="Itoh M."/>
            <person name="Ishii Y."/>
            <person name="Arakawa T."/>
            <person name="Shibata K."/>
            <person name="Shinagawa A."/>
            <person name="Shinozaki K."/>
        </authorList>
    </citation>
    <scope>NUCLEOTIDE SEQUENCE [LARGE SCALE MRNA] (ISOFORM 1)</scope>
    <source>
        <strain>cv. Columbia</strain>
    </source>
</reference>
<reference key="4">
    <citation type="journal article" date="2003" name="Science">
        <title>Empirical analysis of transcriptional activity in the Arabidopsis genome.</title>
        <authorList>
            <person name="Yamada K."/>
            <person name="Lim J."/>
            <person name="Dale J.M."/>
            <person name="Chen H."/>
            <person name="Shinn P."/>
            <person name="Palm C.J."/>
            <person name="Southwick A.M."/>
            <person name="Wu H.C."/>
            <person name="Kim C.J."/>
            <person name="Nguyen M."/>
            <person name="Pham P.K."/>
            <person name="Cheuk R.F."/>
            <person name="Karlin-Newmann G."/>
            <person name="Liu S.X."/>
            <person name="Lam B."/>
            <person name="Sakano H."/>
            <person name="Wu T."/>
            <person name="Yu G."/>
            <person name="Miranda M."/>
            <person name="Quach H.L."/>
            <person name="Tripp M."/>
            <person name="Chang C.H."/>
            <person name="Lee J.M."/>
            <person name="Toriumi M.J."/>
            <person name="Chan M.M."/>
            <person name="Tang C.C."/>
            <person name="Onodera C.S."/>
            <person name="Deng J.M."/>
            <person name="Akiyama K."/>
            <person name="Ansari Y."/>
            <person name="Arakawa T."/>
            <person name="Banh J."/>
            <person name="Banno F."/>
            <person name="Bowser L."/>
            <person name="Brooks S.Y."/>
            <person name="Carninci P."/>
            <person name="Chao Q."/>
            <person name="Choy N."/>
            <person name="Enju A."/>
            <person name="Goldsmith A.D."/>
            <person name="Gurjal M."/>
            <person name="Hansen N.F."/>
            <person name="Hayashizaki Y."/>
            <person name="Johnson-Hopson C."/>
            <person name="Hsuan V.W."/>
            <person name="Iida K."/>
            <person name="Karnes M."/>
            <person name="Khan S."/>
            <person name="Koesema E."/>
            <person name="Ishida J."/>
            <person name="Jiang P.X."/>
            <person name="Jones T."/>
            <person name="Kawai J."/>
            <person name="Kamiya A."/>
            <person name="Meyers C."/>
            <person name="Nakajima M."/>
            <person name="Narusaka M."/>
            <person name="Seki M."/>
            <person name="Sakurai T."/>
            <person name="Satou M."/>
            <person name="Tamse R."/>
            <person name="Vaysberg M."/>
            <person name="Wallender E.K."/>
            <person name="Wong C."/>
            <person name="Yamamura Y."/>
            <person name="Yuan S."/>
            <person name="Shinozaki K."/>
            <person name="Davis R.W."/>
            <person name="Theologis A."/>
            <person name="Ecker J.R."/>
        </authorList>
    </citation>
    <scope>NUCLEOTIDE SEQUENCE [LARGE SCALE MRNA] (ISOFORM 1)</scope>
    <source>
        <strain>cv. Columbia</strain>
    </source>
</reference>
<reference key="5">
    <citation type="submission" date="2002-03" db="EMBL/GenBank/DDBJ databases">
        <title>Full-length cDNA from Arabidopsis thaliana.</title>
        <authorList>
            <person name="Brover V.V."/>
            <person name="Troukhan M.E."/>
            <person name="Alexandrov N.A."/>
            <person name="Lu Y.-P."/>
            <person name="Flavell R.B."/>
            <person name="Feldmann K.A."/>
        </authorList>
    </citation>
    <scope>NUCLEOTIDE SEQUENCE [LARGE SCALE MRNA] (ISOFORM 2)</scope>
</reference>
<reference key="6">
    <citation type="journal article" date="2005" name="Plant Physiol.">
        <title>Identification of cis-elements that regulate gene expression during initiation of axillary bud outgrowth in Arabidopsis.</title>
        <authorList>
            <person name="Tatematsu K."/>
            <person name="Ward S."/>
            <person name="Leyser O."/>
            <person name="Kamiya Y."/>
            <person name="Nambara E."/>
        </authorList>
    </citation>
    <scope>INDUCTION BY DECAPITATION</scope>
</reference>
<reference key="7">
    <citation type="journal article" date="2009" name="Plant Physiol.">
        <title>Large-scale Arabidopsis phosphoproteome profiling reveals novel chloroplast kinase substrates and phosphorylation networks.</title>
        <authorList>
            <person name="Reiland S."/>
            <person name="Messerli G."/>
            <person name="Baerenfaller K."/>
            <person name="Gerrits B."/>
            <person name="Endler A."/>
            <person name="Grossmann J."/>
            <person name="Gruissem W."/>
            <person name="Baginsky S."/>
        </authorList>
    </citation>
    <scope>PHOSPHORYLATION [LARGE SCALE ANALYSIS] AT SER-47 AND THR-50</scope>
    <scope>IDENTIFICATION BY MASS SPECTROMETRY [LARGE SCALE ANALYSIS]</scope>
</reference>
<reference key="8">
    <citation type="journal article" date="2013" name="Mol. Biol. Rep.">
        <title>Molecular characterization of the Brassica rapa auxin-repressed, superfamily genes, BrARP1 and BrDRM1.</title>
        <authorList>
            <person name="Lee J."/>
            <person name="Han C.T."/>
            <person name="Hur Y."/>
        </authorList>
    </citation>
    <scope>DISRUPTION PHENOTYPE</scope>
</reference>
<reference key="9">
    <citation type="journal article" date="2013" name="Plant Physiol.">
        <title>EBE, an AP2/ERF transcription factor highly expressed in proliferating cells, affects shoot architecture in Arabidopsis.</title>
        <authorList>
            <person name="Mehrnia M."/>
            <person name="Balazadeh S."/>
            <person name="Zanor M.I."/>
            <person name="Mueller-Roeber B."/>
        </authorList>
    </citation>
    <scope>INDUCTION BY ERF114</scope>
</reference>
<reference key="10">
    <citation type="journal article" date="2014" name="Mol. Genet. Genomics">
        <title>DRM1 and DRM2 expression regulation: potential role of splice variants in response to stress and environmental factors in Arabidopsis.</title>
        <authorList>
            <person name="Rae G.M."/>
            <person name="Uversky V.N."/>
            <person name="David K."/>
            <person name="Wood M."/>
        </authorList>
    </citation>
    <scope>ALTERNATIVE SPLICING</scope>
    <scope>TISSUE SPECIFICITY</scope>
    <scope>INDUCTION</scope>
    <scope>TOPOLOGY</scope>
</reference>
<feature type="chain" id="PRO_0000436080" description="Dormancy-associated protein homolog 1">
    <location>
        <begin position="1"/>
        <end position="108"/>
    </location>
</feature>
<feature type="region of interest" description="Disordered" evidence="1">
    <location>
        <begin position="28"/>
        <end position="59"/>
    </location>
</feature>
<feature type="modified residue" description="Phosphoserine" evidence="13">
    <location>
        <position position="47"/>
    </location>
</feature>
<feature type="modified residue" description="Phosphothreonine" evidence="13">
    <location>
        <position position="50"/>
    </location>
</feature>
<feature type="splice variant" id="VSP_058256" description="In isoform 2.">
    <location>
        <begin position="31"/>
        <end position="32"/>
    </location>
</feature>
<sequence length="108" mass="11656">MWDETVAGPKPEHGLGRLRNKITTQPLDIKGVGEGSSSKTVAAVAGSPGTPTTPGSARKENVWRSVFHPGSNIATRGMGTNLFDKPSHPNSPTVYDWLYSDDTRSKHR</sequence>